<gene>
    <name evidence="1" type="primary">deoC</name>
    <name type="ordered locus">Dhaf_4274</name>
</gene>
<accession>B8FUK9</accession>
<evidence type="ECO:0000255" key="1">
    <source>
        <dbReference type="HAMAP-Rule" id="MF_00114"/>
    </source>
</evidence>
<proteinExistence type="inferred from homology"/>
<feature type="chain" id="PRO_1000119176" description="Deoxyribose-phosphate aldolase">
    <location>
        <begin position="1"/>
        <end position="218"/>
    </location>
</feature>
<feature type="active site" description="Proton donor/acceptor" evidence="1">
    <location>
        <position position="92"/>
    </location>
</feature>
<feature type="active site" description="Schiff-base intermediate with acetaldehyde" evidence="1">
    <location>
        <position position="156"/>
    </location>
</feature>
<feature type="active site" description="Proton donor/acceptor" evidence="1">
    <location>
        <position position="185"/>
    </location>
</feature>
<protein>
    <recommendedName>
        <fullName evidence="1">Deoxyribose-phosphate aldolase</fullName>
        <shortName evidence="1">DERA</shortName>
        <ecNumber evidence="1">4.1.2.4</ecNumber>
    </recommendedName>
    <alternativeName>
        <fullName evidence="1">2-deoxy-D-ribose 5-phosphate aldolase</fullName>
    </alternativeName>
    <alternativeName>
        <fullName evidence="1">Phosphodeoxyriboaldolase</fullName>
        <shortName evidence="1">Deoxyriboaldolase</shortName>
    </alternativeName>
</protein>
<keyword id="KW-0963">Cytoplasm</keyword>
<keyword id="KW-0456">Lyase</keyword>
<keyword id="KW-0704">Schiff base</keyword>
<dbReference type="EC" id="4.1.2.4" evidence="1"/>
<dbReference type="EMBL" id="CP001336">
    <property type="protein sequence ID" value="ACL22279.1"/>
    <property type="molecule type" value="Genomic_DNA"/>
</dbReference>
<dbReference type="SMR" id="B8FUK9"/>
<dbReference type="KEGG" id="dhd:Dhaf_4274"/>
<dbReference type="HOGENOM" id="CLU_053595_0_2_9"/>
<dbReference type="UniPathway" id="UPA00002">
    <property type="reaction ID" value="UER00468"/>
</dbReference>
<dbReference type="Proteomes" id="UP000007726">
    <property type="component" value="Chromosome"/>
</dbReference>
<dbReference type="GO" id="GO:0005737">
    <property type="term" value="C:cytoplasm"/>
    <property type="evidence" value="ECO:0007669"/>
    <property type="project" value="UniProtKB-SubCell"/>
</dbReference>
<dbReference type="GO" id="GO:0004139">
    <property type="term" value="F:deoxyribose-phosphate aldolase activity"/>
    <property type="evidence" value="ECO:0007669"/>
    <property type="project" value="UniProtKB-UniRule"/>
</dbReference>
<dbReference type="GO" id="GO:0006018">
    <property type="term" value="P:2-deoxyribose 1-phosphate catabolic process"/>
    <property type="evidence" value="ECO:0007669"/>
    <property type="project" value="UniProtKB-UniRule"/>
</dbReference>
<dbReference type="GO" id="GO:0016052">
    <property type="term" value="P:carbohydrate catabolic process"/>
    <property type="evidence" value="ECO:0007669"/>
    <property type="project" value="TreeGrafter"/>
</dbReference>
<dbReference type="GO" id="GO:0009264">
    <property type="term" value="P:deoxyribonucleotide catabolic process"/>
    <property type="evidence" value="ECO:0007669"/>
    <property type="project" value="InterPro"/>
</dbReference>
<dbReference type="CDD" id="cd00959">
    <property type="entry name" value="DeoC"/>
    <property type="match status" value="1"/>
</dbReference>
<dbReference type="FunFam" id="3.20.20.70:FF:000044">
    <property type="entry name" value="Deoxyribose-phosphate aldolase"/>
    <property type="match status" value="1"/>
</dbReference>
<dbReference type="Gene3D" id="3.20.20.70">
    <property type="entry name" value="Aldolase class I"/>
    <property type="match status" value="1"/>
</dbReference>
<dbReference type="HAMAP" id="MF_00114">
    <property type="entry name" value="DeoC_type1"/>
    <property type="match status" value="1"/>
</dbReference>
<dbReference type="InterPro" id="IPR013785">
    <property type="entry name" value="Aldolase_TIM"/>
</dbReference>
<dbReference type="InterPro" id="IPR011343">
    <property type="entry name" value="DeoC"/>
</dbReference>
<dbReference type="InterPro" id="IPR002915">
    <property type="entry name" value="DeoC/FbaB/LacD_aldolase"/>
</dbReference>
<dbReference type="InterPro" id="IPR028581">
    <property type="entry name" value="DeoC_typeI"/>
</dbReference>
<dbReference type="NCBIfam" id="TIGR00126">
    <property type="entry name" value="deoC"/>
    <property type="match status" value="1"/>
</dbReference>
<dbReference type="PANTHER" id="PTHR10889">
    <property type="entry name" value="DEOXYRIBOSE-PHOSPHATE ALDOLASE"/>
    <property type="match status" value="1"/>
</dbReference>
<dbReference type="PANTHER" id="PTHR10889:SF1">
    <property type="entry name" value="DEOXYRIBOSE-PHOSPHATE ALDOLASE"/>
    <property type="match status" value="1"/>
</dbReference>
<dbReference type="Pfam" id="PF01791">
    <property type="entry name" value="DeoC"/>
    <property type="match status" value="1"/>
</dbReference>
<dbReference type="PIRSF" id="PIRSF001357">
    <property type="entry name" value="DeoC"/>
    <property type="match status" value="1"/>
</dbReference>
<dbReference type="SMART" id="SM01133">
    <property type="entry name" value="DeoC"/>
    <property type="match status" value="1"/>
</dbReference>
<dbReference type="SUPFAM" id="SSF51569">
    <property type="entry name" value="Aldolase"/>
    <property type="match status" value="1"/>
</dbReference>
<reference key="1">
    <citation type="journal article" date="2012" name="BMC Microbiol.">
        <title>Genome sequence of Desulfitobacterium hafniense DCB-2, a Gram-positive anaerobe capable of dehalogenation and metal reduction.</title>
        <authorList>
            <person name="Kim S.H."/>
            <person name="Harzman C."/>
            <person name="Davis J.K."/>
            <person name="Hutcheson R."/>
            <person name="Broderick J.B."/>
            <person name="Marsh T.L."/>
            <person name="Tiedje J.M."/>
        </authorList>
    </citation>
    <scope>NUCLEOTIDE SEQUENCE [LARGE SCALE GENOMIC DNA]</scope>
    <source>
        <strain>DSM 10664 / DCB-2</strain>
    </source>
</reference>
<sequence length="218" mass="22986">MRTMNLAGMIDHTLLKPEATEKDIVNLCHEAKQHKFATVCINPAYICTAAKLLHGSGVGVATVIGFPLGATMTEIKVQEIFAAKAHGAREVDIVINIGWAKSGNWEAVAKDITRAVEAAHCCGVTIKVIIETSLLTEEEKQKAAEIVKASGADYIKTSTGFAGGGATVEDVRNLKAWVGQSVKVKASGGIRSRETALQMVEAGADRLGTSSGVQIITV</sequence>
<comment type="function">
    <text evidence="1">Catalyzes a reversible aldol reaction between acetaldehyde and D-glyceraldehyde 3-phosphate to generate 2-deoxy-D-ribose 5-phosphate.</text>
</comment>
<comment type="catalytic activity">
    <reaction evidence="1">
        <text>2-deoxy-D-ribose 5-phosphate = D-glyceraldehyde 3-phosphate + acetaldehyde</text>
        <dbReference type="Rhea" id="RHEA:12821"/>
        <dbReference type="ChEBI" id="CHEBI:15343"/>
        <dbReference type="ChEBI" id="CHEBI:59776"/>
        <dbReference type="ChEBI" id="CHEBI:62877"/>
        <dbReference type="EC" id="4.1.2.4"/>
    </reaction>
</comment>
<comment type="pathway">
    <text evidence="1">Carbohydrate degradation; 2-deoxy-D-ribose 1-phosphate degradation; D-glyceraldehyde 3-phosphate and acetaldehyde from 2-deoxy-alpha-D-ribose 1-phosphate: step 2/2.</text>
</comment>
<comment type="subcellular location">
    <subcellularLocation>
        <location evidence="1">Cytoplasm</location>
    </subcellularLocation>
</comment>
<comment type="similarity">
    <text evidence="1">Belongs to the DeoC/FbaB aldolase family. DeoC type 1 subfamily.</text>
</comment>
<name>DEOC_DESHD</name>
<organism>
    <name type="scientific">Desulfitobacterium hafniense (strain DSM 10664 / DCB-2)</name>
    <dbReference type="NCBI Taxonomy" id="272564"/>
    <lineage>
        <taxon>Bacteria</taxon>
        <taxon>Bacillati</taxon>
        <taxon>Bacillota</taxon>
        <taxon>Clostridia</taxon>
        <taxon>Eubacteriales</taxon>
        <taxon>Desulfitobacteriaceae</taxon>
        <taxon>Desulfitobacterium</taxon>
    </lineage>
</organism>